<proteinExistence type="evidence at transcript level"/>
<keyword id="KW-0007">Acetylation</keyword>
<keyword id="KW-0597">Phosphoprotein</keyword>
<keyword id="KW-1185">Reference proteome</keyword>
<evidence type="ECO:0000250" key="1">
    <source>
        <dbReference type="UniProtKB" id="Q96AT1"/>
    </source>
</evidence>
<evidence type="ECO:0000256" key="2">
    <source>
        <dbReference type="SAM" id="MobiDB-lite"/>
    </source>
</evidence>
<organism>
    <name type="scientific">Bos taurus</name>
    <name type="common">Bovine</name>
    <dbReference type="NCBI Taxonomy" id="9913"/>
    <lineage>
        <taxon>Eukaryota</taxon>
        <taxon>Metazoa</taxon>
        <taxon>Chordata</taxon>
        <taxon>Craniata</taxon>
        <taxon>Vertebrata</taxon>
        <taxon>Euteleostomi</taxon>
        <taxon>Mammalia</taxon>
        <taxon>Eutheria</taxon>
        <taxon>Laurasiatheria</taxon>
        <taxon>Artiodactyla</taxon>
        <taxon>Ruminantia</taxon>
        <taxon>Pecora</taxon>
        <taxon>Bovidae</taxon>
        <taxon>Bovinae</taxon>
        <taxon>Bos</taxon>
    </lineage>
</organism>
<accession>Q3MHJ0</accession>
<name>K1143_BOVIN</name>
<dbReference type="EMBL" id="BC105221">
    <property type="protein sequence ID" value="AAI05222.1"/>
    <property type="molecule type" value="mRNA"/>
</dbReference>
<dbReference type="RefSeq" id="NP_001029893.1">
    <property type="nucleotide sequence ID" value="NM_001034721.1"/>
</dbReference>
<dbReference type="SMR" id="Q3MHJ0"/>
<dbReference type="FunCoup" id="Q3MHJ0">
    <property type="interactions" value="3429"/>
</dbReference>
<dbReference type="STRING" id="9913.ENSBTAP00000022233"/>
<dbReference type="PaxDb" id="9913-ENSBTAP00000022233"/>
<dbReference type="Ensembl" id="ENSBTAT00000022233.6">
    <property type="protein sequence ID" value="ENSBTAP00000022233.4"/>
    <property type="gene ID" value="ENSBTAG00000016725.6"/>
</dbReference>
<dbReference type="GeneID" id="541014"/>
<dbReference type="KEGG" id="bta:541014"/>
<dbReference type="CTD" id="57456"/>
<dbReference type="VEuPathDB" id="HostDB:ENSBTAG00000016725"/>
<dbReference type="VGNC" id="VGNC:30563">
    <property type="gene designation" value="KIAA1143"/>
</dbReference>
<dbReference type="eggNOG" id="ENOG502S2KJ">
    <property type="taxonomic scope" value="Eukaryota"/>
</dbReference>
<dbReference type="GeneTree" id="ENSGT00390000001296"/>
<dbReference type="HOGENOM" id="CLU_111288_0_1_1"/>
<dbReference type="InParanoid" id="Q3MHJ0"/>
<dbReference type="OMA" id="KRQVGYR"/>
<dbReference type="OrthoDB" id="10043580at2759"/>
<dbReference type="TreeFam" id="TF313955"/>
<dbReference type="Proteomes" id="UP000009136">
    <property type="component" value="Chromosome 22"/>
</dbReference>
<dbReference type="Bgee" id="ENSBTAG00000016725">
    <property type="expression patterns" value="Expressed in oocyte and 106 other cell types or tissues"/>
</dbReference>
<dbReference type="InterPro" id="IPR027911">
    <property type="entry name" value="DUF4604"/>
</dbReference>
<dbReference type="InterPro" id="IPR040219">
    <property type="entry name" value="KIAA1143-like"/>
</dbReference>
<dbReference type="PANTHER" id="PTHR31195">
    <property type="entry name" value="GEO02494P1"/>
    <property type="match status" value="1"/>
</dbReference>
<dbReference type="PANTHER" id="PTHR31195:SF2">
    <property type="entry name" value="GEO02494P1"/>
    <property type="match status" value="1"/>
</dbReference>
<dbReference type="Pfam" id="PF15377">
    <property type="entry name" value="DUF4604"/>
    <property type="match status" value="1"/>
</dbReference>
<sequence length="156" mass="17730">MSKRNQVSYVRPAEPAFLARFKERVGYKEGPTVETKRIQPQLPEEDGDHSDKEDEQPQVVVLKKGDLSAEEVMKIKAEIKAARADEEPPSADGRIMYRKPVKRSSDEKHSGLSASSKKKKTKEEDEINKQDSVKKNSQKQIKNSSLLSFDNEDENE</sequence>
<feature type="chain" id="PRO_0000248337" description="Uncharacterized protein KIAA1143 homolog">
    <location>
        <begin position="1"/>
        <end position="156"/>
    </location>
</feature>
<feature type="region of interest" description="Disordered" evidence="2">
    <location>
        <begin position="22"/>
        <end position="64"/>
    </location>
</feature>
<feature type="region of interest" description="Disordered" evidence="2">
    <location>
        <begin position="81"/>
        <end position="156"/>
    </location>
</feature>
<feature type="compositionally biased region" description="Acidic residues" evidence="2">
    <location>
        <begin position="43"/>
        <end position="56"/>
    </location>
</feature>
<feature type="compositionally biased region" description="Basic and acidic residues" evidence="2">
    <location>
        <begin position="121"/>
        <end position="134"/>
    </location>
</feature>
<feature type="modified residue" description="Phosphoserine" evidence="1">
    <location>
        <position position="50"/>
    </location>
</feature>
<feature type="modified residue" description="N6-acetyllysine" evidence="1">
    <location>
        <position position="108"/>
    </location>
</feature>
<feature type="modified residue" description="Phosphoserine" evidence="1">
    <location>
        <position position="148"/>
    </location>
</feature>
<reference key="1">
    <citation type="submission" date="2005-09" db="EMBL/GenBank/DDBJ databases">
        <authorList>
            <consortium name="NIH - Mammalian Gene Collection (MGC) project"/>
        </authorList>
    </citation>
    <scope>NUCLEOTIDE SEQUENCE [LARGE SCALE MRNA]</scope>
    <source>
        <strain>Hereford</strain>
        <tissue>Thymus</tissue>
    </source>
</reference>
<protein>
    <recommendedName>
        <fullName>Uncharacterized protein KIAA1143 homolog</fullName>
    </recommendedName>
</protein>